<dbReference type="EC" id="3.1.3.11" evidence="1"/>
<dbReference type="EMBL" id="AE009948">
    <property type="protein sequence ID" value="AAM99418.1"/>
    <property type="molecule type" value="Genomic_DNA"/>
</dbReference>
<dbReference type="RefSeq" id="NP_687546.1">
    <property type="nucleotide sequence ID" value="NC_004116.1"/>
</dbReference>
<dbReference type="RefSeq" id="WP_000064640.1">
    <property type="nucleotide sequence ID" value="NC_004116.1"/>
</dbReference>
<dbReference type="STRING" id="208435.SAG0516"/>
<dbReference type="KEGG" id="sag:SAG0516"/>
<dbReference type="PATRIC" id="fig|208435.3.peg.513"/>
<dbReference type="HOGENOM" id="CLU_028392_2_0_9"/>
<dbReference type="OrthoDB" id="9779903at2"/>
<dbReference type="UniPathway" id="UPA00138"/>
<dbReference type="Proteomes" id="UP000000821">
    <property type="component" value="Chromosome"/>
</dbReference>
<dbReference type="GO" id="GO:0042132">
    <property type="term" value="F:fructose 1,6-bisphosphate 1-phosphatase activity"/>
    <property type="evidence" value="ECO:0007669"/>
    <property type="project" value="UniProtKB-UniRule"/>
</dbReference>
<dbReference type="GO" id="GO:0006094">
    <property type="term" value="P:gluconeogenesis"/>
    <property type="evidence" value="ECO:0007669"/>
    <property type="project" value="UniProtKB-UniRule"/>
</dbReference>
<dbReference type="Gene3D" id="3.60.21.10">
    <property type="match status" value="1"/>
</dbReference>
<dbReference type="HAMAP" id="MF_01854">
    <property type="entry name" value="FBPase_class3"/>
    <property type="match status" value="1"/>
</dbReference>
<dbReference type="InterPro" id="IPR009164">
    <property type="entry name" value="FBPtase_class3"/>
</dbReference>
<dbReference type="InterPro" id="IPR029052">
    <property type="entry name" value="Metallo-depent_PP-like"/>
</dbReference>
<dbReference type="Pfam" id="PF06874">
    <property type="entry name" value="FBPase_2"/>
    <property type="match status" value="1"/>
</dbReference>
<dbReference type="PIRSF" id="PIRSF000906">
    <property type="entry name" value="FBPtase_Bacill"/>
    <property type="match status" value="1"/>
</dbReference>
<dbReference type="SUPFAM" id="SSF56300">
    <property type="entry name" value="Metallo-dependent phosphatases"/>
    <property type="match status" value="1"/>
</dbReference>
<gene>
    <name evidence="1" type="primary">fbp</name>
    <name type="ordered locus">SAG0516</name>
</gene>
<feature type="chain" id="PRO_0000363114" description="Fructose-1,6-bisphosphatase class 3">
    <location>
        <begin position="1"/>
        <end position="643"/>
    </location>
</feature>
<protein>
    <recommendedName>
        <fullName evidence="1">Fructose-1,6-bisphosphatase class 3</fullName>
        <shortName evidence="1">FBPase class 3</shortName>
        <ecNumber evidence="1">3.1.3.11</ecNumber>
    </recommendedName>
    <alternativeName>
        <fullName evidence="1">D-fructose-1,6-bisphosphate 1-phosphohydrolase class 3</fullName>
    </alternativeName>
</protein>
<keyword id="KW-0119">Carbohydrate metabolism</keyword>
<keyword id="KW-0378">Hydrolase</keyword>
<keyword id="KW-0464">Manganese</keyword>
<keyword id="KW-1185">Reference proteome</keyword>
<accession>Q8E146</accession>
<name>F16PC_STRA5</name>
<reference key="1">
    <citation type="journal article" date="2002" name="Proc. Natl. Acad. Sci. U.S.A.">
        <title>Complete genome sequence and comparative genomic analysis of an emerging human pathogen, serotype V Streptococcus agalactiae.</title>
        <authorList>
            <person name="Tettelin H."/>
            <person name="Masignani V."/>
            <person name="Cieslewicz M.J."/>
            <person name="Eisen J.A."/>
            <person name="Peterson S.N."/>
            <person name="Wessels M.R."/>
            <person name="Paulsen I.T."/>
            <person name="Nelson K.E."/>
            <person name="Margarit I."/>
            <person name="Read T.D."/>
            <person name="Madoff L.C."/>
            <person name="Wolf A.M."/>
            <person name="Beanan M.J."/>
            <person name="Brinkac L.M."/>
            <person name="Daugherty S.C."/>
            <person name="DeBoy R.T."/>
            <person name="Durkin A.S."/>
            <person name="Kolonay J.F."/>
            <person name="Madupu R."/>
            <person name="Lewis M.R."/>
            <person name="Radune D."/>
            <person name="Fedorova N.B."/>
            <person name="Scanlan D."/>
            <person name="Khouri H.M."/>
            <person name="Mulligan S."/>
            <person name="Carty H.A."/>
            <person name="Cline R.T."/>
            <person name="Van Aken S.E."/>
            <person name="Gill J."/>
            <person name="Scarselli M."/>
            <person name="Mora M."/>
            <person name="Iacobini E.T."/>
            <person name="Brettoni C."/>
            <person name="Galli G."/>
            <person name="Mariani M."/>
            <person name="Vegni F."/>
            <person name="Maione D."/>
            <person name="Rinaudo D."/>
            <person name="Rappuoli R."/>
            <person name="Telford J.L."/>
            <person name="Kasper D.L."/>
            <person name="Grandi G."/>
            <person name="Fraser C.M."/>
        </authorList>
    </citation>
    <scope>NUCLEOTIDE SEQUENCE [LARGE SCALE GENOMIC DNA]</scope>
    <source>
        <strain>ATCC BAA-611 / 2603 V/R</strain>
    </source>
</reference>
<sequence length="643" mass="74921">MSNFYKLLKEKFPRKEDIVTEMINLEAICQLPKGTEYFISDLHGEYDAVDYLLRTGAGSIRAKLLDCFDWQKIVAVDLDDFCILLYYPKEKLAFDKMNLSASAYKTKLWEMIPLQIQVLKYFSSKYTKSKVRKQLSGKFAYIIEELLAEIDRNPEKKSYFDTIIEKLFELDQVEDLIIVLSQTIQVLIIDHLHVVGDIYDRGRYPDRILNRLMAFPNLDIQWGNHDVTWMGAASGSYLCMVNVIRIAARYNNITLIEDRYGINLRRLVDYSRRYYEPLPSFVPILDGEEMTHPDELDLLNMIQQATAILQFKLEAQLIDRRPEFQMHNRQLINQVNYKDLSISIKEVVHQLKDFNSRCIDSKNPSRLTSEEEELLQQLMIAFQTSESLKKHIDFLFEKGSMYLTYNDNLLFHGCIPMHSNGDFKSFKIAGKTYGGRDLLDLFESQIRLAYARPEKHDDLATDIIWYLWCGENSSLFGKNAMTTFERYYVSDKVTHQERKNPYFKLRDKDDICTALLQEFDLPKFGHIVNGHTPVKEKNGEQPIKANGKMLVIDGGFAKGYQKNTGLAGYTLIYNSYGIQLISHLPFTSIEEVLSGTNYIIDTKRLVEEAKDRILVKDTTIGQKLTKEIKDLDHLYRHFQEYDD</sequence>
<organism>
    <name type="scientific">Streptococcus agalactiae serotype V (strain ATCC BAA-611 / 2603 V/R)</name>
    <dbReference type="NCBI Taxonomy" id="208435"/>
    <lineage>
        <taxon>Bacteria</taxon>
        <taxon>Bacillati</taxon>
        <taxon>Bacillota</taxon>
        <taxon>Bacilli</taxon>
        <taxon>Lactobacillales</taxon>
        <taxon>Streptococcaceae</taxon>
        <taxon>Streptococcus</taxon>
    </lineage>
</organism>
<proteinExistence type="inferred from homology"/>
<evidence type="ECO:0000255" key="1">
    <source>
        <dbReference type="HAMAP-Rule" id="MF_01854"/>
    </source>
</evidence>
<comment type="catalytic activity">
    <reaction evidence="1">
        <text>beta-D-fructose 1,6-bisphosphate + H2O = beta-D-fructose 6-phosphate + phosphate</text>
        <dbReference type="Rhea" id="RHEA:11064"/>
        <dbReference type="ChEBI" id="CHEBI:15377"/>
        <dbReference type="ChEBI" id="CHEBI:32966"/>
        <dbReference type="ChEBI" id="CHEBI:43474"/>
        <dbReference type="ChEBI" id="CHEBI:57634"/>
        <dbReference type="EC" id="3.1.3.11"/>
    </reaction>
</comment>
<comment type="cofactor">
    <cofactor evidence="1">
        <name>Mn(2+)</name>
        <dbReference type="ChEBI" id="CHEBI:29035"/>
    </cofactor>
</comment>
<comment type="pathway">
    <text evidence="1">Carbohydrate biosynthesis; gluconeogenesis.</text>
</comment>
<comment type="similarity">
    <text evidence="1">Belongs to the FBPase class 3 family.</text>
</comment>